<evidence type="ECO:0000250" key="1">
    <source>
        <dbReference type="UniProtKB" id="Q26710"/>
    </source>
</evidence>
<evidence type="ECO:0000250" key="2">
    <source>
        <dbReference type="UniProtKB" id="Q39219"/>
    </source>
</evidence>
<evidence type="ECO:0000255" key="3"/>
<evidence type="ECO:0000256" key="4">
    <source>
        <dbReference type="SAM" id="MobiDB-lite"/>
    </source>
</evidence>
<evidence type="ECO:0000269" key="5">
    <source>
    </source>
</evidence>
<evidence type="ECO:0000269" key="6">
    <source>
    </source>
</evidence>
<evidence type="ECO:0000269" key="7">
    <source>
    </source>
</evidence>
<evidence type="ECO:0000269" key="8">
    <source>
    </source>
</evidence>
<evidence type="ECO:0000269" key="9">
    <source>
    </source>
</evidence>
<evidence type="ECO:0000269" key="10">
    <source>
    </source>
</evidence>
<evidence type="ECO:0000269" key="11">
    <source>
    </source>
</evidence>
<evidence type="ECO:0000269" key="12">
    <source>
    </source>
</evidence>
<evidence type="ECO:0000269" key="13">
    <source>
    </source>
</evidence>
<evidence type="ECO:0000269" key="14">
    <source>
    </source>
</evidence>
<evidence type="ECO:0000305" key="15"/>
<organism>
    <name type="scientific">Arabidopsis thaliana</name>
    <name type="common">Mouse-ear cress</name>
    <dbReference type="NCBI Taxonomy" id="3702"/>
    <lineage>
        <taxon>Eukaryota</taxon>
        <taxon>Viridiplantae</taxon>
        <taxon>Streptophyta</taxon>
        <taxon>Embryophyta</taxon>
        <taxon>Tracheophyta</taxon>
        <taxon>Spermatophyta</taxon>
        <taxon>Magnoliopsida</taxon>
        <taxon>eudicotyledons</taxon>
        <taxon>Gunneridae</taxon>
        <taxon>Pentapetalae</taxon>
        <taxon>rosids</taxon>
        <taxon>malvids</taxon>
        <taxon>Brassicales</taxon>
        <taxon>Brassicaceae</taxon>
        <taxon>Camelineae</taxon>
        <taxon>Arabidopsis</taxon>
    </lineage>
</organism>
<protein>
    <recommendedName>
        <fullName>Ubiquinol oxidase 4, chloroplastic/chromoplastic</fullName>
        <ecNumber>1.10.3.11</ecNumber>
    </recommendedName>
    <alternativeName>
        <fullName>Alternative oxidase 4</fullName>
    </alternativeName>
    <alternativeName>
        <fullName>Plastid terminal oxidase</fullName>
    </alternativeName>
    <alternativeName>
        <fullName>Protein IMMUTANS</fullName>
    </alternativeName>
</protein>
<keyword id="KW-0125">Carotenoid biosynthesis</keyword>
<keyword id="KW-0150">Chloroplast</keyword>
<keyword id="KW-0957">Chromoplast</keyword>
<keyword id="KW-0249">Electron transport</keyword>
<keyword id="KW-0408">Iron</keyword>
<keyword id="KW-0472">Membrane</keyword>
<keyword id="KW-0479">Metal-binding</keyword>
<keyword id="KW-0560">Oxidoreductase</keyword>
<keyword id="KW-0934">Plastid</keyword>
<keyword id="KW-1185">Reference proteome</keyword>
<keyword id="KW-0679">Respiratory chain</keyword>
<keyword id="KW-0793">Thylakoid</keyword>
<keyword id="KW-0809">Transit peptide</keyword>
<keyword id="KW-0812">Transmembrane</keyword>
<keyword id="KW-1133">Transmembrane helix</keyword>
<keyword id="KW-0813">Transport</keyword>
<reference key="1">
    <citation type="journal article" date="1999" name="Plant Cell">
        <title>The IMMUTANS variegation locus of Arabidopsis defines a mitochondrial alternative oxidase homolog that functions during early chloroplast biogenesis.</title>
        <authorList>
            <person name="Wu D."/>
            <person name="Wright D.A."/>
            <person name="Wetzel C."/>
            <person name="Voytas D.F."/>
            <person name="Rodermel S.R."/>
        </authorList>
    </citation>
    <scope>NUCLEOTIDE SEQUENCE [MRNA]</scope>
    <scope>FUNCTION</scope>
    <source>
        <strain>cv. Columbia</strain>
    </source>
</reference>
<reference key="2">
    <citation type="journal article" date="1999" name="Plant Cell">
        <title>Mutations in the Arabidopsis gene IMMUTANS cause a variegated phenotype by inactivating a chloroplast terminal oxidase associated with phytoene desaturation.</title>
        <authorList>
            <person name="Carol P."/>
            <person name="Stevenson D."/>
            <person name="Bisanz C."/>
            <person name="Breitenbach J."/>
            <person name="Sandmann G."/>
            <person name="Mache R."/>
            <person name="Coupland G."/>
            <person name="Kuntz M."/>
        </authorList>
    </citation>
    <scope>NUCLEOTIDE SEQUENCE [MRNA]</scope>
    <scope>SUBCELLULAR LOCATION</scope>
    <scope>FUNCTION</scope>
</reference>
<reference key="3">
    <citation type="journal article" date="1999" name="Nature">
        <title>Sequence and analysis of chromosome 4 of the plant Arabidopsis thaliana.</title>
        <authorList>
            <person name="Mayer K.F.X."/>
            <person name="Schueller C."/>
            <person name="Wambutt R."/>
            <person name="Murphy G."/>
            <person name="Volckaert G."/>
            <person name="Pohl T."/>
            <person name="Duesterhoeft A."/>
            <person name="Stiekema W."/>
            <person name="Entian K.-D."/>
            <person name="Terryn N."/>
            <person name="Harris B."/>
            <person name="Ansorge W."/>
            <person name="Brandt P."/>
            <person name="Grivell L.A."/>
            <person name="Rieger M."/>
            <person name="Weichselgartner M."/>
            <person name="de Simone V."/>
            <person name="Obermaier B."/>
            <person name="Mache R."/>
            <person name="Mueller M."/>
            <person name="Kreis M."/>
            <person name="Delseny M."/>
            <person name="Puigdomenech P."/>
            <person name="Watson M."/>
            <person name="Schmidtheini T."/>
            <person name="Reichert B."/>
            <person name="Portetelle D."/>
            <person name="Perez-Alonso M."/>
            <person name="Boutry M."/>
            <person name="Bancroft I."/>
            <person name="Vos P."/>
            <person name="Hoheisel J."/>
            <person name="Zimmermann W."/>
            <person name="Wedler H."/>
            <person name="Ridley P."/>
            <person name="Langham S.-A."/>
            <person name="McCullagh B."/>
            <person name="Bilham L."/>
            <person name="Robben J."/>
            <person name="van der Schueren J."/>
            <person name="Grymonprez B."/>
            <person name="Chuang Y.-J."/>
            <person name="Vandenbussche F."/>
            <person name="Braeken M."/>
            <person name="Weltjens I."/>
            <person name="Voet M."/>
            <person name="Bastiaens I."/>
            <person name="Aert R."/>
            <person name="Defoor E."/>
            <person name="Weitzenegger T."/>
            <person name="Bothe G."/>
            <person name="Ramsperger U."/>
            <person name="Hilbert H."/>
            <person name="Braun M."/>
            <person name="Holzer E."/>
            <person name="Brandt A."/>
            <person name="Peters S."/>
            <person name="van Staveren M."/>
            <person name="Dirkse W."/>
            <person name="Mooijman P."/>
            <person name="Klein Lankhorst R."/>
            <person name="Rose M."/>
            <person name="Hauf J."/>
            <person name="Koetter P."/>
            <person name="Berneiser S."/>
            <person name="Hempel S."/>
            <person name="Feldpausch M."/>
            <person name="Lamberth S."/>
            <person name="Van den Daele H."/>
            <person name="De Keyser A."/>
            <person name="Buysshaert C."/>
            <person name="Gielen J."/>
            <person name="Villarroel R."/>
            <person name="De Clercq R."/>
            <person name="van Montagu M."/>
            <person name="Rogers J."/>
            <person name="Cronin A."/>
            <person name="Quail M.A."/>
            <person name="Bray-Allen S."/>
            <person name="Clark L."/>
            <person name="Doggett J."/>
            <person name="Hall S."/>
            <person name="Kay M."/>
            <person name="Lennard N."/>
            <person name="McLay K."/>
            <person name="Mayes R."/>
            <person name="Pettett A."/>
            <person name="Rajandream M.A."/>
            <person name="Lyne M."/>
            <person name="Benes V."/>
            <person name="Rechmann S."/>
            <person name="Borkova D."/>
            <person name="Bloecker H."/>
            <person name="Scharfe M."/>
            <person name="Grimm M."/>
            <person name="Loehnert T.-H."/>
            <person name="Dose S."/>
            <person name="de Haan M."/>
            <person name="Maarse A.C."/>
            <person name="Schaefer M."/>
            <person name="Mueller-Auer S."/>
            <person name="Gabel C."/>
            <person name="Fuchs M."/>
            <person name="Fartmann B."/>
            <person name="Granderath K."/>
            <person name="Dauner D."/>
            <person name="Herzl A."/>
            <person name="Neumann S."/>
            <person name="Argiriou A."/>
            <person name="Vitale D."/>
            <person name="Liguori R."/>
            <person name="Piravandi E."/>
            <person name="Massenet O."/>
            <person name="Quigley F."/>
            <person name="Clabauld G."/>
            <person name="Muendlein A."/>
            <person name="Felber R."/>
            <person name="Schnabl S."/>
            <person name="Hiller R."/>
            <person name="Schmidt W."/>
            <person name="Lecharny A."/>
            <person name="Aubourg S."/>
            <person name="Chefdor F."/>
            <person name="Cooke R."/>
            <person name="Berger C."/>
            <person name="Monfort A."/>
            <person name="Casacuberta E."/>
            <person name="Gibbons T."/>
            <person name="Weber N."/>
            <person name="Vandenbol M."/>
            <person name="Bargues M."/>
            <person name="Terol J."/>
            <person name="Torres A."/>
            <person name="Perez-Perez A."/>
            <person name="Purnelle B."/>
            <person name="Bent E."/>
            <person name="Johnson S."/>
            <person name="Tacon D."/>
            <person name="Jesse T."/>
            <person name="Heijnen L."/>
            <person name="Schwarz S."/>
            <person name="Scholler P."/>
            <person name="Heber S."/>
            <person name="Francs P."/>
            <person name="Bielke C."/>
            <person name="Frishman D."/>
            <person name="Haase D."/>
            <person name="Lemcke K."/>
            <person name="Mewes H.-W."/>
            <person name="Stocker S."/>
            <person name="Zaccaria P."/>
            <person name="Bevan M."/>
            <person name="Wilson R.K."/>
            <person name="de la Bastide M."/>
            <person name="Habermann K."/>
            <person name="Parnell L."/>
            <person name="Dedhia N."/>
            <person name="Gnoj L."/>
            <person name="Schutz K."/>
            <person name="Huang E."/>
            <person name="Spiegel L."/>
            <person name="Sekhon M."/>
            <person name="Murray J."/>
            <person name="Sheet P."/>
            <person name="Cordes M."/>
            <person name="Abu-Threideh J."/>
            <person name="Stoneking T."/>
            <person name="Kalicki J."/>
            <person name="Graves T."/>
            <person name="Harmon G."/>
            <person name="Edwards J."/>
            <person name="Latreille P."/>
            <person name="Courtney L."/>
            <person name="Cloud J."/>
            <person name="Abbott A."/>
            <person name="Scott K."/>
            <person name="Johnson D."/>
            <person name="Minx P."/>
            <person name="Bentley D."/>
            <person name="Fulton B."/>
            <person name="Miller N."/>
            <person name="Greco T."/>
            <person name="Kemp K."/>
            <person name="Kramer J."/>
            <person name="Fulton L."/>
            <person name="Mardis E."/>
            <person name="Dante M."/>
            <person name="Pepin K."/>
            <person name="Hillier L.W."/>
            <person name="Nelson J."/>
            <person name="Spieth J."/>
            <person name="Ryan E."/>
            <person name="Andrews S."/>
            <person name="Geisel C."/>
            <person name="Layman D."/>
            <person name="Du H."/>
            <person name="Ali J."/>
            <person name="Berghoff A."/>
            <person name="Jones K."/>
            <person name="Drone K."/>
            <person name="Cotton M."/>
            <person name="Joshu C."/>
            <person name="Antonoiu B."/>
            <person name="Zidanic M."/>
            <person name="Strong C."/>
            <person name="Sun H."/>
            <person name="Lamar B."/>
            <person name="Yordan C."/>
            <person name="Ma P."/>
            <person name="Zhong J."/>
            <person name="Preston R."/>
            <person name="Vil D."/>
            <person name="Shekher M."/>
            <person name="Matero A."/>
            <person name="Shah R."/>
            <person name="Swaby I.K."/>
            <person name="O'Shaughnessy A."/>
            <person name="Rodriguez M."/>
            <person name="Hoffman J."/>
            <person name="Till S."/>
            <person name="Granat S."/>
            <person name="Shohdy N."/>
            <person name="Hasegawa A."/>
            <person name="Hameed A."/>
            <person name="Lodhi M."/>
            <person name="Johnson A."/>
            <person name="Chen E."/>
            <person name="Marra M.A."/>
            <person name="Martienssen R."/>
            <person name="McCombie W.R."/>
        </authorList>
    </citation>
    <scope>NUCLEOTIDE SEQUENCE [LARGE SCALE GENOMIC DNA]</scope>
    <source>
        <strain>cv. Columbia</strain>
    </source>
</reference>
<reference key="4">
    <citation type="journal article" date="2017" name="Plant J.">
        <title>Araport11: a complete reannotation of the Arabidopsis thaliana reference genome.</title>
        <authorList>
            <person name="Cheng C.Y."/>
            <person name="Krishnakumar V."/>
            <person name="Chan A.P."/>
            <person name="Thibaud-Nissen F."/>
            <person name="Schobel S."/>
            <person name="Town C.D."/>
        </authorList>
    </citation>
    <scope>GENOME REANNOTATION</scope>
    <source>
        <strain>cv. Columbia</strain>
    </source>
</reference>
<reference key="5">
    <citation type="journal article" date="2003" name="Science">
        <title>Empirical analysis of transcriptional activity in the Arabidopsis genome.</title>
        <authorList>
            <person name="Yamada K."/>
            <person name="Lim J."/>
            <person name="Dale J.M."/>
            <person name="Chen H."/>
            <person name="Shinn P."/>
            <person name="Palm C.J."/>
            <person name="Southwick A.M."/>
            <person name="Wu H.C."/>
            <person name="Kim C.J."/>
            <person name="Nguyen M."/>
            <person name="Pham P.K."/>
            <person name="Cheuk R.F."/>
            <person name="Karlin-Newmann G."/>
            <person name="Liu S.X."/>
            <person name="Lam B."/>
            <person name="Sakano H."/>
            <person name="Wu T."/>
            <person name="Yu G."/>
            <person name="Miranda M."/>
            <person name="Quach H.L."/>
            <person name="Tripp M."/>
            <person name="Chang C.H."/>
            <person name="Lee J.M."/>
            <person name="Toriumi M.J."/>
            <person name="Chan M.M."/>
            <person name="Tang C.C."/>
            <person name="Onodera C.S."/>
            <person name="Deng J.M."/>
            <person name="Akiyama K."/>
            <person name="Ansari Y."/>
            <person name="Arakawa T."/>
            <person name="Banh J."/>
            <person name="Banno F."/>
            <person name="Bowser L."/>
            <person name="Brooks S.Y."/>
            <person name="Carninci P."/>
            <person name="Chao Q."/>
            <person name="Choy N."/>
            <person name="Enju A."/>
            <person name="Goldsmith A.D."/>
            <person name="Gurjal M."/>
            <person name="Hansen N.F."/>
            <person name="Hayashizaki Y."/>
            <person name="Johnson-Hopson C."/>
            <person name="Hsuan V.W."/>
            <person name="Iida K."/>
            <person name="Karnes M."/>
            <person name="Khan S."/>
            <person name="Koesema E."/>
            <person name="Ishida J."/>
            <person name="Jiang P.X."/>
            <person name="Jones T."/>
            <person name="Kawai J."/>
            <person name="Kamiya A."/>
            <person name="Meyers C."/>
            <person name="Nakajima M."/>
            <person name="Narusaka M."/>
            <person name="Seki M."/>
            <person name="Sakurai T."/>
            <person name="Satou M."/>
            <person name="Tamse R."/>
            <person name="Vaysberg M."/>
            <person name="Wallender E.K."/>
            <person name="Wong C."/>
            <person name="Yamamura Y."/>
            <person name="Yuan S."/>
            <person name="Shinozaki K."/>
            <person name="Davis R.W."/>
            <person name="Theologis A."/>
            <person name="Ecker J.R."/>
        </authorList>
    </citation>
    <scope>NUCLEOTIDE SEQUENCE [LARGE SCALE MRNA]</scope>
    <source>
        <strain>cv. Columbia</strain>
    </source>
</reference>
<reference key="6">
    <citation type="submission" date="2005-03" db="EMBL/GenBank/DDBJ databases">
        <title>Large-scale analysis of RIKEN Arabidopsis full-length (RAFL) cDNAs.</title>
        <authorList>
            <person name="Totoki Y."/>
            <person name="Seki M."/>
            <person name="Ishida J."/>
            <person name="Nakajima M."/>
            <person name="Enju A."/>
            <person name="Kamiya A."/>
            <person name="Narusaka M."/>
            <person name="Shin-i T."/>
            <person name="Nakagawa M."/>
            <person name="Sakamoto N."/>
            <person name="Oishi K."/>
            <person name="Kohara Y."/>
            <person name="Kobayashi M."/>
            <person name="Toyoda A."/>
            <person name="Sakaki Y."/>
            <person name="Sakurai T."/>
            <person name="Iida K."/>
            <person name="Akiyama K."/>
            <person name="Satou M."/>
            <person name="Toyoda T."/>
            <person name="Konagaya A."/>
            <person name="Carninci P."/>
            <person name="Kawai J."/>
            <person name="Hayashizaki Y."/>
            <person name="Shinozaki K."/>
        </authorList>
    </citation>
    <scope>NUCLEOTIDE SEQUENCE [LARGE SCALE MRNA] OF 236-351</scope>
    <source>
        <strain>cv. Columbia</strain>
    </source>
</reference>
<reference key="7">
    <citation type="journal article" date="1994" name="Plant J.">
        <title>Nuclear-organelle interactions: the immutans variegation mutant of Arabidopsis is plastid autonomous and impaired in carotenoid biosynthesis.</title>
        <authorList>
            <person name="Wetzel C.M."/>
            <person name="Jiang C.Z."/>
            <person name="Meehan L.J."/>
            <person name="Voytas D.F."/>
            <person name="Rodermel S.R."/>
        </authorList>
    </citation>
    <scope>FUNCTION</scope>
    <scope>DISRUPTION PHENOTYPE</scope>
</reference>
<reference key="8">
    <citation type="journal article" date="2000" name="Plant Physiol.">
        <title>A plastid terminal oxidase associated with carotenoid desaturation during chromoplast differentiation.</title>
        <authorList>
            <person name="Josse E.-M."/>
            <person name="Simkin A.J."/>
            <person name="Gaffe J."/>
            <person name="Laboure A.-M."/>
            <person name="Kuntz M."/>
            <person name="Carol P."/>
        </authorList>
    </citation>
    <scope>FUNCTION</scope>
    <scope>SUBCELLULAR LOCATION</scope>
</reference>
<reference key="9">
    <citation type="journal article" date="2001" name="Plant Physiol.">
        <title>The Arabidopsis immutans mutation affects plastid differentiation and the morphogenesis of white and green sectors in variegated plants.</title>
        <authorList>
            <person name="Aluru M.R."/>
            <person name="Bae H."/>
            <person name="Wu D."/>
            <person name="Rodermel S.R."/>
        </authorList>
    </citation>
    <scope>FUNCTION</scope>
    <scope>TISSUE SPECIFICITY</scope>
</reference>
<reference key="10">
    <citation type="journal article" date="2003" name="Planta">
        <title>Location, expression and orientation of the putative chlororespiratory enzymes, Ndh and IMMUTANS, in higher-plant plastids.</title>
        <authorList>
            <person name="Lennon A.M."/>
            <person name="Prommeenate P."/>
            <person name="Nixon P.J."/>
        </authorList>
    </citation>
    <scope>FUNCTION</scope>
    <scope>SUBCELLULAR LOCATION</scope>
    <scope>DEVELOPMENTAL STAGE</scope>
    <source>
        <strain>cv. Col-1</strain>
    </source>
</reference>
<reference key="11">
    <citation type="journal article" date="2004" name="Physiol. Plantarum">
        <title>Control of chloroplast redox by the IMMUTANS terminal oxidase.</title>
        <authorList>
            <person name="Aluru M.R."/>
            <person name="Rodermel S.R."/>
        </authorList>
    </citation>
    <scope>FUNCTION</scope>
    <scope>CATALYTIC ACTIVITY</scope>
</reference>
<reference key="12">
    <citation type="journal article" date="2005" name="J. Biol. Chem.">
        <title>Sequences required for the activity of PTOX (IMMUTANS), a plastid terminal oxidase: in vitro and in planta mutagenesis of iron-binding sites and a conserved sequence that corresponds to Exon 8.</title>
        <authorList>
            <person name="Fu A."/>
            <person name="Park S."/>
            <person name="Rodermel S."/>
        </authorList>
    </citation>
    <scope>FUNCTION</scope>
    <scope>IRON-BINDING SITES</scope>
    <scope>MUTAGENESIS OF GLU-136; GLU-175; HIS-178; GLU-227; GLU-296 AND HIS-299</scope>
</reference>
<reference key="13">
    <citation type="journal article" date="2006" name="J. Exp. Bot.">
        <title>Arabidopsis variegation mutants: new insights into chloroplast biogenesis.</title>
        <authorList>
            <person name="Aluru M.R."/>
            <person name="Yu F."/>
            <person name="Fu A."/>
            <person name="Rodermel S."/>
        </authorList>
    </citation>
    <scope>FUNCTION</scope>
    <scope>CATALYTIC ACTIVITY</scope>
    <scope>MUTAGENESIS OF GLU-136; GLU-175; HIS-177; HIS-178; GLU-224; GLU-227; GLU-296; GLU-298 AND HIS-299</scope>
</reference>
<reference key="14">
    <citation type="journal article" date="2009" name="Plant Physiol.">
        <title>Chloroplast photooxidation-induced transcriptome reprogramming in Arabidopsis immutans white leaf sectors.</title>
        <authorList>
            <person name="Aluru M.R."/>
            <person name="Zola J."/>
            <person name="Foudree A."/>
            <person name="Rodermel S.R."/>
        </authorList>
    </citation>
    <scope>FUNCTION</scope>
</reference>
<sequence>MAAISGISSGTLTISRPLVTLRRSRAAVSYSSSHRLLHHLPLSSRRLLLRNNHRVQATILQDDEEKVVVEESFKAETSTGTEPLEEPNMSSSSTSAFETWIIKLEQGVNVFLTDSVIKILDTLYRDRTYARFFVLETIARVPYFAFMSVLHMYETFGWWRRADYLKVHFAESWNEMHHLLIMEELGGNSWWFDRFLAQHIATFYYFMTVFLYILSPRMAYHFSECVESHAYETYDKFLKASGEELKNMPAPDIAVKYYTGGDLYLFDEFQTSRTPNTRRPVIENLYDVFVNIRDDEAEHCKTMRACQTLGSLRSPHSILEDDDTEEESGCVVPEEAHCEGIVDCLKKSITS</sequence>
<name>AOX4_ARATH</name>
<dbReference type="EC" id="1.10.3.11"/>
<dbReference type="EMBL" id="AF098072">
    <property type="protein sequence ID" value="AAD03599.1"/>
    <property type="molecule type" value="mRNA"/>
</dbReference>
<dbReference type="EMBL" id="AJ004881">
    <property type="protein sequence ID" value="CAA06190.1"/>
    <property type="molecule type" value="mRNA"/>
</dbReference>
<dbReference type="EMBL" id="AL021712">
    <property type="protein sequence ID" value="CAA16776.1"/>
    <property type="status" value="ALT_SEQ"/>
    <property type="molecule type" value="Genomic_DNA"/>
</dbReference>
<dbReference type="EMBL" id="AL161557">
    <property type="protein sequence ID" value="CAB79181.1"/>
    <property type="status" value="ALT_SEQ"/>
    <property type="molecule type" value="Genomic_DNA"/>
</dbReference>
<dbReference type="EMBL" id="CP002687">
    <property type="protein sequence ID" value="AEE84583.1"/>
    <property type="molecule type" value="Genomic_DNA"/>
</dbReference>
<dbReference type="EMBL" id="AF324663">
    <property type="protein sequence ID" value="AAG40014.1"/>
    <property type="molecule type" value="mRNA"/>
</dbReference>
<dbReference type="EMBL" id="AF326898">
    <property type="protein sequence ID" value="AAG41480.1"/>
    <property type="molecule type" value="mRNA"/>
</dbReference>
<dbReference type="EMBL" id="AF339717">
    <property type="protein sequence ID" value="AAK00399.1"/>
    <property type="molecule type" value="mRNA"/>
</dbReference>
<dbReference type="EMBL" id="AY045699">
    <property type="protein sequence ID" value="AAK74057.1"/>
    <property type="molecule type" value="mRNA"/>
</dbReference>
<dbReference type="EMBL" id="BT000558">
    <property type="protein sequence ID" value="AAN18127.1"/>
    <property type="molecule type" value="mRNA"/>
</dbReference>
<dbReference type="EMBL" id="AK221825">
    <property type="protein sequence ID" value="BAD94037.1"/>
    <property type="status" value="ALT_INIT"/>
    <property type="molecule type" value="mRNA"/>
</dbReference>
<dbReference type="PIR" id="T04907">
    <property type="entry name" value="T04907"/>
</dbReference>
<dbReference type="PIR" id="T52422">
    <property type="entry name" value="T52422"/>
</dbReference>
<dbReference type="RefSeq" id="NP_567658.1">
    <property type="nucleotide sequence ID" value="NM_118352.4"/>
</dbReference>
<dbReference type="SMR" id="Q56X52"/>
<dbReference type="FunCoup" id="Q56X52">
    <property type="interactions" value="564"/>
</dbReference>
<dbReference type="STRING" id="3702.Q56X52"/>
<dbReference type="PaxDb" id="3702-AT4G22260.1"/>
<dbReference type="ProteomicsDB" id="244472"/>
<dbReference type="EnsemblPlants" id="AT4G22260.1">
    <property type="protein sequence ID" value="AT4G22260.1"/>
    <property type="gene ID" value="AT4G22260"/>
</dbReference>
<dbReference type="GeneID" id="828321"/>
<dbReference type="Gramene" id="AT4G22260.1">
    <property type="protein sequence ID" value="AT4G22260.1"/>
    <property type="gene ID" value="AT4G22260"/>
</dbReference>
<dbReference type="KEGG" id="ath:AT4G22260"/>
<dbReference type="Araport" id="AT4G22260"/>
<dbReference type="TAIR" id="AT4G22260">
    <property type="gene designation" value="IM"/>
</dbReference>
<dbReference type="eggNOG" id="ENOG502QRMM">
    <property type="taxonomic scope" value="Eukaryota"/>
</dbReference>
<dbReference type="HOGENOM" id="CLU_057018_0_0_1"/>
<dbReference type="InParanoid" id="Q56X52"/>
<dbReference type="OMA" id="NERWFDR"/>
<dbReference type="PhylomeDB" id="Q56X52"/>
<dbReference type="PRO" id="PR:Q56X52"/>
<dbReference type="Proteomes" id="UP000006548">
    <property type="component" value="Chromosome 4"/>
</dbReference>
<dbReference type="ExpressionAtlas" id="Q56X52">
    <property type="expression patterns" value="baseline and differential"/>
</dbReference>
<dbReference type="GO" id="GO:0009535">
    <property type="term" value="C:chloroplast thylakoid membrane"/>
    <property type="evidence" value="ECO:0007669"/>
    <property type="project" value="UniProtKB-SubCell"/>
</dbReference>
<dbReference type="GO" id="GO:0046862">
    <property type="term" value="C:chromoplast membrane"/>
    <property type="evidence" value="ECO:0007669"/>
    <property type="project" value="UniProtKB-SubCell"/>
</dbReference>
<dbReference type="GO" id="GO:0009579">
    <property type="term" value="C:thylakoid"/>
    <property type="evidence" value="ECO:0000314"/>
    <property type="project" value="TAIR"/>
</dbReference>
<dbReference type="GO" id="GO:0009916">
    <property type="term" value="F:alternative oxidase activity"/>
    <property type="evidence" value="ECO:0000250"/>
    <property type="project" value="TAIR"/>
</dbReference>
<dbReference type="GO" id="GO:0046872">
    <property type="term" value="F:metal ion binding"/>
    <property type="evidence" value="ECO:0007669"/>
    <property type="project" value="UniProtKB-KW"/>
</dbReference>
<dbReference type="GO" id="GO:0106292">
    <property type="term" value="F:superoxide-generating NADPH oxidase activity"/>
    <property type="evidence" value="ECO:0000314"/>
    <property type="project" value="TAIR"/>
</dbReference>
<dbReference type="GO" id="GO:0102721">
    <property type="term" value="F:ubiquinol:oxygen oxidoreductase activity"/>
    <property type="evidence" value="ECO:0007669"/>
    <property type="project" value="UniProtKB-EC"/>
</dbReference>
<dbReference type="GO" id="GO:0016117">
    <property type="term" value="P:carotenoid biosynthetic process"/>
    <property type="evidence" value="ECO:0000315"/>
    <property type="project" value="TAIR"/>
</dbReference>
<dbReference type="GO" id="GO:0009657">
    <property type="term" value="P:plastid organization"/>
    <property type="evidence" value="ECO:0000315"/>
    <property type="project" value="TAIR"/>
</dbReference>
<dbReference type="CDD" id="cd01053">
    <property type="entry name" value="AOX"/>
    <property type="match status" value="1"/>
</dbReference>
<dbReference type="FunFam" id="1.20.1260.140:FF:000003">
    <property type="entry name" value="Ubiquinol oxidase"/>
    <property type="match status" value="1"/>
</dbReference>
<dbReference type="Gene3D" id="1.20.1260.140">
    <property type="entry name" value="Alternative oxidase"/>
    <property type="match status" value="1"/>
</dbReference>
<dbReference type="InterPro" id="IPR002680">
    <property type="entry name" value="AOX"/>
</dbReference>
<dbReference type="InterPro" id="IPR038659">
    <property type="entry name" value="AOX_sf"/>
</dbReference>
<dbReference type="PANTHER" id="PTHR31803">
    <property type="entry name" value="ALTERNATIVE OXIDASE"/>
    <property type="match status" value="1"/>
</dbReference>
<dbReference type="PANTHER" id="PTHR31803:SF10">
    <property type="entry name" value="UBIQUINOL OXIDASE 4, CHLOROPLASTIC_CHROMOPLASTIC"/>
    <property type="match status" value="1"/>
</dbReference>
<dbReference type="Pfam" id="PF01786">
    <property type="entry name" value="AOX"/>
    <property type="match status" value="1"/>
</dbReference>
<gene>
    <name type="primary">AOX4</name>
    <name type="synonym">IM</name>
    <name type="synonym">PTOX</name>
    <name type="ordered locus">At4g22260</name>
    <name type="ORF">T10I14_90</name>
</gene>
<accession>Q56X52</accession>
<accession>O49631</accession>
<accession>Q9SBA4</accession>
<accession>Q9ZSQ3</accession>
<proteinExistence type="evidence at protein level"/>
<comment type="function">
    <text evidence="5 6 7 8 9 10 11 12 13 14">Acts early in chloroplast biogenesis as a component of a redox chain responsible for phytoene desaturation. Prevents the generation of toxic oxygen radicals and photooxidation of the nascent photosynthetic apparatus. Involved in the differentiation of multiple plastid types, including chloroplasts, amyloplasts, and etioplasts. Might participate in the chloroplast respiratory chain.</text>
</comment>
<comment type="catalytic activity">
    <reaction evidence="8 10">
        <text>2 a ubiquinol + O2 = 2 a ubiquinone + 2 H2O</text>
        <dbReference type="Rhea" id="RHEA:30255"/>
        <dbReference type="Rhea" id="RHEA-COMP:9565"/>
        <dbReference type="Rhea" id="RHEA-COMP:9566"/>
        <dbReference type="ChEBI" id="CHEBI:15377"/>
        <dbReference type="ChEBI" id="CHEBI:15379"/>
        <dbReference type="ChEBI" id="CHEBI:16389"/>
        <dbReference type="ChEBI" id="CHEBI:17976"/>
        <dbReference type="EC" id="1.10.3.11"/>
    </reaction>
</comment>
<comment type="cofactor">
    <cofactor evidence="2">
        <name>Fe cation</name>
        <dbReference type="ChEBI" id="CHEBI:24875"/>
    </cofactor>
    <text evidence="2">Binds 2 iron ions per subunit.</text>
</comment>
<comment type="subcellular location">
    <subcellularLocation>
        <location evidence="7 14">Plastid</location>
        <location evidence="7 14">Chloroplast thylakoid membrane</location>
        <topology evidence="7 14">Multi-pass membrane protein</topology>
        <orientation evidence="14">Stromal side</orientation>
    </subcellularLocation>
    <subcellularLocation>
        <location evidence="5">Plastid</location>
        <location evidence="5">Chromoplast membrane</location>
        <topology evidence="5">Multi-pass membrane protein</topology>
    </subcellularLocation>
    <text evidence="7">localized to the stromal thylakoid lamellae.</text>
</comment>
<comment type="tissue specificity">
    <text evidence="6">Ubiquitous.</text>
</comment>
<comment type="developmental stage">
    <text evidence="7">Expressed throughout the development of the leaves.</text>
</comment>
<comment type="disruption phenotype">
    <text evidence="12">Variegated cotyledons and leaves. The amount of white tissue increases with light intensity.</text>
</comment>
<comment type="similarity">
    <text evidence="15">Belongs to the alternative oxidase family.</text>
</comment>
<comment type="sequence caution" evidence="15">
    <conflict type="erroneous initiation">
        <sequence resource="EMBL-CDS" id="BAD94037"/>
    </conflict>
    <text>Truncated N-terminus.</text>
</comment>
<comment type="sequence caution" evidence="15">
    <conflict type="erroneous gene model prediction">
        <sequence resource="EMBL-CDS" id="CAA16776"/>
    </conflict>
</comment>
<comment type="sequence caution" evidence="15">
    <conflict type="erroneous gene model prediction">
        <sequence resource="EMBL-CDS" id="CAB79181"/>
    </conflict>
</comment>
<feature type="transit peptide" description="Chloroplast and chromoplast" evidence="3">
    <location>
        <begin position="1"/>
        <end position="56"/>
    </location>
</feature>
<feature type="chain" id="PRO_0000045423" description="Ubiquinol oxidase 4, chloroplastic/chromoplastic">
    <location>
        <begin position="57"/>
        <end position="351"/>
    </location>
</feature>
<feature type="transmembrane region" description="Helical" evidence="3">
    <location>
        <begin position="132"/>
        <end position="152"/>
    </location>
</feature>
<feature type="transmembrane region" description="Helical" evidence="3">
    <location>
        <begin position="195"/>
        <end position="215"/>
    </location>
</feature>
<feature type="region of interest" description="Disordered" evidence="4">
    <location>
        <begin position="71"/>
        <end position="91"/>
    </location>
</feature>
<feature type="binding site" evidence="1">
    <location>
        <position position="136"/>
    </location>
    <ligand>
        <name>Fe cation</name>
        <dbReference type="ChEBI" id="CHEBI:24875"/>
        <label>1</label>
    </ligand>
</feature>
<feature type="binding site" evidence="1">
    <location>
        <position position="175"/>
    </location>
    <ligand>
        <name>Fe cation</name>
        <dbReference type="ChEBI" id="CHEBI:24875"/>
        <label>1</label>
    </ligand>
</feature>
<feature type="binding site" evidence="1">
    <location>
        <position position="175"/>
    </location>
    <ligand>
        <name>Fe cation</name>
        <dbReference type="ChEBI" id="CHEBI:24875"/>
        <label>2</label>
    </ligand>
</feature>
<feature type="binding site" evidence="1">
    <location>
        <position position="178"/>
    </location>
    <ligand>
        <name>Fe cation</name>
        <dbReference type="ChEBI" id="CHEBI:24875"/>
        <label>1</label>
    </ligand>
</feature>
<feature type="binding site" evidence="1">
    <location>
        <position position="227"/>
    </location>
    <ligand>
        <name>Fe cation</name>
        <dbReference type="ChEBI" id="CHEBI:24875"/>
        <label>2</label>
    </ligand>
</feature>
<feature type="binding site" evidence="1">
    <location>
        <position position="296"/>
    </location>
    <ligand>
        <name>Fe cation</name>
        <dbReference type="ChEBI" id="CHEBI:24875"/>
        <label>1</label>
    </ligand>
</feature>
<feature type="binding site" evidence="1">
    <location>
        <position position="296"/>
    </location>
    <ligand>
        <name>Fe cation</name>
        <dbReference type="ChEBI" id="CHEBI:24875"/>
        <label>2</label>
    </ligand>
</feature>
<feature type="binding site" evidence="1">
    <location>
        <position position="299"/>
    </location>
    <ligand>
        <name>Fe cation</name>
        <dbReference type="ChEBI" id="CHEBI:24875"/>
        <label>2</label>
    </ligand>
</feature>
<feature type="mutagenesis site" description="Abolishes cyanide-resistant oxygen consumption." evidence="9 10">
    <original>E</original>
    <variation>A</variation>
    <variation>D</variation>
    <variation>H</variation>
    <location>
        <position position="136"/>
    </location>
</feature>
<feature type="mutagenesis site" description="Abolishes cyanide-resistant oxygen consumption." evidence="9 10">
    <original>E</original>
    <variation>A</variation>
    <variation>D</variation>
    <variation>H</variation>
    <location>
        <position position="175"/>
    </location>
</feature>
<feature type="mutagenesis site" description="No effect." evidence="10">
    <original>H</original>
    <variation>A</variation>
    <location>
        <position position="177"/>
    </location>
</feature>
<feature type="mutagenesis site" description="Abolishes cyanide-resistant oxygen consumption." evidence="9 10">
    <original>H</original>
    <variation>A</variation>
    <variation>E</variation>
    <variation>N</variation>
    <location>
        <position position="178"/>
    </location>
</feature>
<feature type="mutagenesis site" description="No effect." evidence="10">
    <original>E</original>
    <variation>A</variation>
    <location>
        <position position="224"/>
    </location>
</feature>
<feature type="mutagenesis site" description="Abolishes cyanide-resistant oxygen consumption." evidence="9 10">
    <original>E</original>
    <variation>A</variation>
    <variation>D</variation>
    <variation>H</variation>
    <location>
        <position position="227"/>
    </location>
</feature>
<feature type="mutagenesis site" description="Abolishes cyanide-resistant oxygen consumption." evidence="9 10">
    <original>E</original>
    <variation>A</variation>
    <variation>D</variation>
    <variation>H</variation>
    <location>
        <position position="296"/>
    </location>
</feature>
<feature type="mutagenesis site" description="No effect." evidence="10">
    <original>E</original>
    <variation>A</variation>
    <location>
        <position position="298"/>
    </location>
</feature>
<feature type="mutagenesis site" description="Abolishes cyanide-resistant oxygen consumption." evidence="9 10">
    <original>H</original>
    <variation>A</variation>
    <variation>E</variation>
    <variation>N</variation>
    <location>
        <position position="299"/>
    </location>
</feature>
<feature type="sequence conflict" description="In Ref. 2; CAA06190." evidence="15" ref="2">
    <original>E</original>
    <variation>D</variation>
    <location>
        <position position="320"/>
    </location>
</feature>